<protein>
    <recommendedName>
        <fullName evidence="1">Glycine--tRNA ligase beta subunit</fullName>
        <ecNumber evidence="1">6.1.1.14</ecNumber>
    </recommendedName>
    <alternativeName>
        <fullName evidence="1">Glycyl-tRNA synthetase beta subunit</fullName>
        <shortName evidence="1">GlyRS</shortName>
    </alternativeName>
</protein>
<dbReference type="EC" id="6.1.1.14" evidence="1"/>
<dbReference type="EMBL" id="CP000521">
    <property type="protein sequence ID" value="ABO13516.2"/>
    <property type="molecule type" value="Genomic_DNA"/>
</dbReference>
<dbReference type="RefSeq" id="WP_000033892.1">
    <property type="nucleotide sequence ID" value="NZ_CACVBA010000001.1"/>
</dbReference>
<dbReference type="SMR" id="A3M9C2"/>
<dbReference type="KEGG" id="acb:A1S_3119"/>
<dbReference type="HOGENOM" id="CLU_007220_2_2_6"/>
<dbReference type="GO" id="GO:0005829">
    <property type="term" value="C:cytosol"/>
    <property type="evidence" value="ECO:0007669"/>
    <property type="project" value="TreeGrafter"/>
</dbReference>
<dbReference type="GO" id="GO:0004814">
    <property type="term" value="F:arginine-tRNA ligase activity"/>
    <property type="evidence" value="ECO:0007669"/>
    <property type="project" value="InterPro"/>
</dbReference>
<dbReference type="GO" id="GO:0005524">
    <property type="term" value="F:ATP binding"/>
    <property type="evidence" value="ECO:0007669"/>
    <property type="project" value="UniProtKB-UniRule"/>
</dbReference>
<dbReference type="GO" id="GO:0004820">
    <property type="term" value="F:glycine-tRNA ligase activity"/>
    <property type="evidence" value="ECO:0007669"/>
    <property type="project" value="UniProtKB-UniRule"/>
</dbReference>
<dbReference type="GO" id="GO:0006420">
    <property type="term" value="P:arginyl-tRNA aminoacylation"/>
    <property type="evidence" value="ECO:0007669"/>
    <property type="project" value="InterPro"/>
</dbReference>
<dbReference type="GO" id="GO:0006426">
    <property type="term" value="P:glycyl-tRNA aminoacylation"/>
    <property type="evidence" value="ECO:0007669"/>
    <property type="project" value="UniProtKB-UniRule"/>
</dbReference>
<dbReference type="HAMAP" id="MF_00255">
    <property type="entry name" value="Gly_tRNA_synth_beta"/>
    <property type="match status" value="1"/>
</dbReference>
<dbReference type="InterPro" id="IPR008909">
    <property type="entry name" value="DALR_anticod-bd"/>
</dbReference>
<dbReference type="InterPro" id="IPR015944">
    <property type="entry name" value="Gly-tRNA-synth_bsu"/>
</dbReference>
<dbReference type="InterPro" id="IPR006194">
    <property type="entry name" value="Gly-tRNA-synth_heterodimer"/>
</dbReference>
<dbReference type="NCBIfam" id="TIGR00211">
    <property type="entry name" value="glyS"/>
    <property type="match status" value="1"/>
</dbReference>
<dbReference type="PANTHER" id="PTHR30075:SF2">
    <property type="entry name" value="GLYCINE--TRNA LIGASE, CHLOROPLASTIC_MITOCHONDRIAL 2"/>
    <property type="match status" value="1"/>
</dbReference>
<dbReference type="PANTHER" id="PTHR30075">
    <property type="entry name" value="GLYCYL-TRNA SYNTHETASE"/>
    <property type="match status" value="1"/>
</dbReference>
<dbReference type="Pfam" id="PF05746">
    <property type="entry name" value="DALR_1"/>
    <property type="match status" value="1"/>
</dbReference>
<dbReference type="Pfam" id="PF02092">
    <property type="entry name" value="tRNA_synt_2f"/>
    <property type="match status" value="1"/>
</dbReference>
<dbReference type="PRINTS" id="PR01045">
    <property type="entry name" value="TRNASYNTHGB"/>
</dbReference>
<dbReference type="SUPFAM" id="SSF109604">
    <property type="entry name" value="HD-domain/PDEase-like"/>
    <property type="match status" value="1"/>
</dbReference>
<dbReference type="PROSITE" id="PS50861">
    <property type="entry name" value="AA_TRNA_LIGASE_II_GLYAB"/>
    <property type="match status" value="1"/>
</dbReference>
<proteinExistence type="inferred from homology"/>
<organism>
    <name type="scientific">Acinetobacter baumannii (strain ATCC 17978 / DSM 105126 / CIP 53.77 / LMG 1025 / NCDC KC755 / 5377)</name>
    <dbReference type="NCBI Taxonomy" id="400667"/>
    <lineage>
        <taxon>Bacteria</taxon>
        <taxon>Pseudomonadati</taxon>
        <taxon>Pseudomonadota</taxon>
        <taxon>Gammaproteobacteria</taxon>
        <taxon>Moraxellales</taxon>
        <taxon>Moraxellaceae</taxon>
        <taxon>Acinetobacter</taxon>
        <taxon>Acinetobacter calcoaceticus/baumannii complex</taxon>
    </lineage>
</organism>
<sequence length="689" mass="75025">MSKHTVLFELGCEELPPKSLKTLRDALQAETVKGLNEAGLDFASVEAYAAPRRLALKIVDVDAAQADTQKRFDGPAVQAAYDAEGKPTKALEGFMRGQGITVDQLSTFQAGKVEKVCYLKDVKGQSLDALLPQILQTALDNLPIAKRMRSAASRTEFVRPVKWVVLLKDDQVIEATIQDHKAGNVTYGHRFHAPEAVTLAHANDYLAALEKAYVVANFEKRQATIQEQVKKLADEVNATAIVPADLLDEVTSLVEWPVALRATFEERYLAVPQEALITTMQDNQKYFCLINAEGKLQPYFITVSNIESKDSTQIIEGNEKVVRPRLSDAEFFFLQDQKQPLASRKEKLANMVFQAQLGTLWDKSTRIAKLAVALSSITGANPADAEKAALLAKCDLTSELVGEFPELQGIAGTYYARIEGENTEVSEALGEQYLPKFAGDVLPKTKTGTTIALADRLDTLVGIFGIGQAPTGSKDPFALRRSAIGILRLIIENELDVTIEELVNLALQGYGDIVKDHDKTRADAVAFLEGRYRAKYEDQGVAVDVLQAVQALAPKSPLDFDKRVNAVNHFRTLPEAAALAAANKRVANILAKEAAPEGSVIEANLVEDAEKALFAELQAVTPVVEPLLAAKDYTAALSKLAALRAPIDAFFDGVMVMADDADLKANRLRLLAQLRNLFTAVADVSVLQG</sequence>
<comment type="catalytic activity">
    <reaction evidence="1">
        <text>tRNA(Gly) + glycine + ATP = glycyl-tRNA(Gly) + AMP + diphosphate</text>
        <dbReference type="Rhea" id="RHEA:16013"/>
        <dbReference type="Rhea" id="RHEA-COMP:9664"/>
        <dbReference type="Rhea" id="RHEA-COMP:9683"/>
        <dbReference type="ChEBI" id="CHEBI:30616"/>
        <dbReference type="ChEBI" id="CHEBI:33019"/>
        <dbReference type="ChEBI" id="CHEBI:57305"/>
        <dbReference type="ChEBI" id="CHEBI:78442"/>
        <dbReference type="ChEBI" id="CHEBI:78522"/>
        <dbReference type="ChEBI" id="CHEBI:456215"/>
        <dbReference type="EC" id="6.1.1.14"/>
    </reaction>
</comment>
<comment type="subunit">
    <text evidence="1">Tetramer of two alpha and two beta subunits.</text>
</comment>
<comment type="subcellular location">
    <subcellularLocation>
        <location evidence="1">Cytoplasm</location>
    </subcellularLocation>
</comment>
<comment type="similarity">
    <text evidence="1">Belongs to the class-II aminoacyl-tRNA synthetase family.</text>
</comment>
<keyword id="KW-0030">Aminoacyl-tRNA synthetase</keyword>
<keyword id="KW-0067">ATP-binding</keyword>
<keyword id="KW-0963">Cytoplasm</keyword>
<keyword id="KW-0436">Ligase</keyword>
<keyword id="KW-0547">Nucleotide-binding</keyword>
<keyword id="KW-0648">Protein biosynthesis</keyword>
<reference key="1">
    <citation type="journal article" date="2007" name="Genes Dev.">
        <title>New insights into Acinetobacter baumannii pathogenesis revealed by high-density pyrosequencing and transposon mutagenesis.</title>
        <authorList>
            <person name="Smith M.G."/>
            <person name="Gianoulis T.A."/>
            <person name="Pukatzki S."/>
            <person name="Mekalanos J.J."/>
            <person name="Ornston L.N."/>
            <person name="Gerstein M."/>
            <person name="Snyder M."/>
        </authorList>
    </citation>
    <scope>NUCLEOTIDE SEQUENCE [LARGE SCALE GENOMIC DNA]</scope>
    <source>
        <strain>ATCC 17978 / DSM 105126 / CIP 53.77 / LMG 1025 / NCDC KC755 / 5377</strain>
    </source>
</reference>
<accession>A3M9C2</accession>
<name>SYGB_ACIBT</name>
<gene>
    <name evidence="1" type="primary">glyS</name>
    <name type="ordered locus">A1S_3119</name>
</gene>
<feature type="chain" id="PRO_1000101255" description="Glycine--tRNA ligase beta subunit">
    <location>
        <begin position="1"/>
        <end position="689"/>
    </location>
</feature>
<evidence type="ECO:0000255" key="1">
    <source>
        <dbReference type="HAMAP-Rule" id="MF_00255"/>
    </source>
</evidence>